<accession>Q7WY67</accession>
<accession>O68259</accession>
<gene>
    <name type="primary">gerT</name>
    <name type="synonym">yozR</name>
    <name type="ordered locus">BSU19490</name>
</gene>
<name>GERT_BACSU</name>
<dbReference type="EMBL" id="AF026147">
    <property type="protein sequence ID" value="AAC17851.1"/>
    <property type="status" value="ALT_FRAME"/>
    <property type="molecule type" value="Genomic_DNA"/>
</dbReference>
<dbReference type="EMBL" id="AL009126">
    <property type="protein sequence ID" value="CAE01457.1"/>
    <property type="molecule type" value="Genomic_DNA"/>
</dbReference>
<dbReference type="RefSeq" id="WP_003231207.1">
    <property type="nucleotide sequence ID" value="NZ_OZ025638.1"/>
</dbReference>
<dbReference type="RefSeq" id="YP_054583.1">
    <property type="nucleotide sequence ID" value="NC_000964.3"/>
</dbReference>
<dbReference type="SMR" id="Q7WY67"/>
<dbReference type="FunCoup" id="Q7WY67">
    <property type="interactions" value="21"/>
</dbReference>
<dbReference type="STRING" id="224308.BSU19490"/>
<dbReference type="PaxDb" id="224308-BSU19490"/>
<dbReference type="EnsemblBacteria" id="CAE01457">
    <property type="protein sequence ID" value="CAE01457"/>
    <property type="gene ID" value="BSU_19490"/>
</dbReference>
<dbReference type="GeneID" id="2914248"/>
<dbReference type="KEGG" id="bsu:BSU19490"/>
<dbReference type="PATRIC" id="fig|224308.179.peg.2132"/>
<dbReference type="eggNOG" id="ENOG50339SJ">
    <property type="taxonomic scope" value="Bacteria"/>
</dbReference>
<dbReference type="InParanoid" id="Q7WY67"/>
<dbReference type="OrthoDB" id="2905328at2"/>
<dbReference type="BioCyc" id="BSUB:BSU19490-MONOMER"/>
<dbReference type="Proteomes" id="UP000001570">
    <property type="component" value="Chromosome"/>
</dbReference>
<dbReference type="CDD" id="cd00298">
    <property type="entry name" value="ACD_sHsps_p23-like"/>
    <property type="match status" value="1"/>
</dbReference>
<dbReference type="Gene3D" id="2.60.40.790">
    <property type="match status" value="1"/>
</dbReference>
<dbReference type="InterPro" id="IPR008978">
    <property type="entry name" value="HSP20-like_chaperone"/>
</dbReference>
<dbReference type="SUPFAM" id="SSF49764">
    <property type="entry name" value="HSP20-like chaperones"/>
    <property type="match status" value="1"/>
</dbReference>
<feature type="chain" id="PRO_0000049675" description="Spore germination protein GerT">
    <location>
        <begin position="1"/>
        <end position="157"/>
    </location>
</feature>
<reference key="1">
    <citation type="journal article" date="1998" name="DNA Res.">
        <title>Sequence analysis of the Bacillus subtilis 168 chromosome region between the sspC and odhA loci (184 degrees-180 degrees).</title>
        <authorList>
            <person name="Ghim S.-Y."/>
            <person name="Choi S.-K."/>
            <person name="Shin B.-S."/>
            <person name="Jeong Y.-M."/>
            <person name="Sorokin A."/>
            <person name="Ehrlich S.D."/>
            <person name="Park S.-H."/>
        </authorList>
    </citation>
    <scope>NUCLEOTIDE SEQUENCE [GENOMIC DNA]</scope>
    <source>
        <strain>168</strain>
    </source>
</reference>
<reference key="2">
    <citation type="journal article" date="1997" name="Nature">
        <title>The complete genome sequence of the Gram-positive bacterium Bacillus subtilis.</title>
        <authorList>
            <person name="Kunst F."/>
            <person name="Ogasawara N."/>
            <person name="Moszer I."/>
            <person name="Albertini A.M."/>
            <person name="Alloni G."/>
            <person name="Azevedo V."/>
            <person name="Bertero M.G."/>
            <person name="Bessieres P."/>
            <person name="Bolotin A."/>
            <person name="Borchert S."/>
            <person name="Borriss R."/>
            <person name="Boursier L."/>
            <person name="Brans A."/>
            <person name="Braun M."/>
            <person name="Brignell S.C."/>
            <person name="Bron S."/>
            <person name="Brouillet S."/>
            <person name="Bruschi C.V."/>
            <person name="Caldwell B."/>
            <person name="Capuano V."/>
            <person name="Carter N.M."/>
            <person name="Choi S.-K."/>
            <person name="Codani J.-J."/>
            <person name="Connerton I.F."/>
            <person name="Cummings N.J."/>
            <person name="Daniel R.A."/>
            <person name="Denizot F."/>
            <person name="Devine K.M."/>
            <person name="Duesterhoeft A."/>
            <person name="Ehrlich S.D."/>
            <person name="Emmerson P.T."/>
            <person name="Entian K.-D."/>
            <person name="Errington J."/>
            <person name="Fabret C."/>
            <person name="Ferrari E."/>
            <person name="Foulger D."/>
            <person name="Fritz C."/>
            <person name="Fujita M."/>
            <person name="Fujita Y."/>
            <person name="Fuma S."/>
            <person name="Galizzi A."/>
            <person name="Galleron N."/>
            <person name="Ghim S.-Y."/>
            <person name="Glaser P."/>
            <person name="Goffeau A."/>
            <person name="Golightly E.J."/>
            <person name="Grandi G."/>
            <person name="Guiseppi G."/>
            <person name="Guy B.J."/>
            <person name="Haga K."/>
            <person name="Haiech J."/>
            <person name="Harwood C.R."/>
            <person name="Henaut A."/>
            <person name="Hilbert H."/>
            <person name="Holsappel S."/>
            <person name="Hosono S."/>
            <person name="Hullo M.-F."/>
            <person name="Itaya M."/>
            <person name="Jones L.-M."/>
            <person name="Joris B."/>
            <person name="Karamata D."/>
            <person name="Kasahara Y."/>
            <person name="Klaerr-Blanchard M."/>
            <person name="Klein C."/>
            <person name="Kobayashi Y."/>
            <person name="Koetter P."/>
            <person name="Koningstein G."/>
            <person name="Krogh S."/>
            <person name="Kumano M."/>
            <person name="Kurita K."/>
            <person name="Lapidus A."/>
            <person name="Lardinois S."/>
            <person name="Lauber J."/>
            <person name="Lazarevic V."/>
            <person name="Lee S.-M."/>
            <person name="Levine A."/>
            <person name="Liu H."/>
            <person name="Masuda S."/>
            <person name="Mauel C."/>
            <person name="Medigue C."/>
            <person name="Medina N."/>
            <person name="Mellado R.P."/>
            <person name="Mizuno M."/>
            <person name="Moestl D."/>
            <person name="Nakai S."/>
            <person name="Noback M."/>
            <person name="Noone D."/>
            <person name="O'Reilly M."/>
            <person name="Ogawa K."/>
            <person name="Ogiwara A."/>
            <person name="Oudega B."/>
            <person name="Park S.-H."/>
            <person name="Parro V."/>
            <person name="Pohl T.M."/>
            <person name="Portetelle D."/>
            <person name="Porwollik S."/>
            <person name="Prescott A.M."/>
            <person name="Presecan E."/>
            <person name="Pujic P."/>
            <person name="Purnelle B."/>
            <person name="Rapoport G."/>
            <person name="Rey M."/>
            <person name="Reynolds S."/>
            <person name="Rieger M."/>
            <person name="Rivolta C."/>
            <person name="Rocha E."/>
            <person name="Roche B."/>
            <person name="Rose M."/>
            <person name="Sadaie Y."/>
            <person name="Sato T."/>
            <person name="Scanlan E."/>
            <person name="Schleich S."/>
            <person name="Schroeter R."/>
            <person name="Scoffone F."/>
            <person name="Sekiguchi J."/>
            <person name="Sekowska A."/>
            <person name="Seror S.J."/>
            <person name="Serror P."/>
            <person name="Shin B.-S."/>
            <person name="Soldo B."/>
            <person name="Sorokin A."/>
            <person name="Tacconi E."/>
            <person name="Takagi T."/>
            <person name="Takahashi H."/>
            <person name="Takemaru K."/>
            <person name="Takeuchi M."/>
            <person name="Tamakoshi A."/>
            <person name="Tanaka T."/>
            <person name="Terpstra P."/>
            <person name="Tognoni A."/>
            <person name="Tosato V."/>
            <person name="Uchiyama S."/>
            <person name="Vandenbol M."/>
            <person name="Vannier F."/>
            <person name="Vassarotti A."/>
            <person name="Viari A."/>
            <person name="Wambutt R."/>
            <person name="Wedler E."/>
            <person name="Wedler H."/>
            <person name="Weitzenegger T."/>
            <person name="Winters P."/>
            <person name="Wipat A."/>
            <person name="Yamamoto H."/>
            <person name="Yamane K."/>
            <person name="Yasumoto K."/>
            <person name="Yata K."/>
            <person name="Yoshida K."/>
            <person name="Yoshikawa H.-F."/>
            <person name="Zumstein E."/>
            <person name="Yoshikawa H."/>
            <person name="Danchin A."/>
        </authorList>
    </citation>
    <scope>NUCLEOTIDE SEQUENCE [LARGE SCALE GENOMIC DNA]</scope>
    <source>
        <strain>168</strain>
    </source>
</reference>
<reference key="3">
    <citation type="journal article" date="2007" name="J. Bacteriol.">
        <title>gerT, a newly discovered germination gene under the control of the sporulation transcription factor sigmaK in Bacillus subtilis.</title>
        <authorList>
            <person name="Ferguson C.C."/>
            <person name="Camp A.H."/>
            <person name="Losick R."/>
        </authorList>
    </citation>
    <scope>FUNCTION IN SPORE GERMINATION</scope>
    <scope>SUBCELLULAR LOCATION</scope>
    <scope>TRANSCRIPTION REGULATION</scope>
</reference>
<sequence length="157" mass="18542">MFEWNKYFPFHNQFSKEALKKADPKEVETYVNRVMESVFGSDYAAQFPFRDPLPQKEHPAKPDAKPDVKPDIDIFETADHVFVKVPISEEWLEQVRIKHTSHELWLENLPRADHPKKVNLPCLVKRKGTKAVYKDGLLEVMFQKQQDYNMSEVEIIR</sequence>
<proteinExistence type="evidence at protein level"/>
<comment type="function">
    <text evidence="1">Involved in spore germination; probably required at the earliest stage of germination.</text>
</comment>
<comment type="subcellular location">
    <subcellularLocation>
        <location evidence="1">Spore coat</location>
    </subcellularLocation>
</comment>
<comment type="induction">
    <text>Induced in late sporulation stage by sigma K. Repressed by GerE.</text>
</comment>
<comment type="miscellaneous">
    <text>Incorporated into the coat in two steps. First, independently of CotE, assembles into foci associated with the forespore. Next, in a CotE-dependent manner, spreads around the developing spore to form a stable contiguous shell.</text>
</comment>
<comment type="sequence caution" evidence="2">
    <conflict type="frameshift">
        <sequence resource="EMBL-CDS" id="AAC17851"/>
    </conflict>
</comment>
<organism>
    <name type="scientific">Bacillus subtilis (strain 168)</name>
    <dbReference type="NCBI Taxonomy" id="224308"/>
    <lineage>
        <taxon>Bacteria</taxon>
        <taxon>Bacillati</taxon>
        <taxon>Bacillota</taxon>
        <taxon>Bacilli</taxon>
        <taxon>Bacillales</taxon>
        <taxon>Bacillaceae</taxon>
        <taxon>Bacillus</taxon>
    </lineage>
</organism>
<protein>
    <recommendedName>
        <fullName>Spore germination protein GerT</fullName>
    </recommendedName>
</protein>
<evidence type="ECO:0000269" key="1">
    <source>
    </source>
</evidence>
<evidence type="ECO:0000305" key="2"/>
<keyword id="KW-0309">Germination</keyword>
<keyword id="KW-1185">Reference proteome</keyword>